<proteinExistence type="inferred from homology"/>
<feature type="chain" id="PRO_1000052683" description="Large ribosomal subunit protein uL5">
    <location>
        <begin position="1"/>
        <end position="179"/>
    </location>
</feature>
<comment type="function">
    <text evidence="1">This is one of the proteins that bind and probably mediate the attachment of the 5S RNA into the large ribosomal subunit, where it forms part of the central protuberance. In the 70S ribosome it contacts protein S13 of the 30S subunit (bridge B1b), connecting the 2 subunits; this bridge is implicated in subunit movement. Contacts the P site tRNA; the 5S rRNA and some of its associated proteins might help stabilize positioning of ribosome-bound tRNAs.</text>
</comment>
<comment type="subunit">
    <text evidence="1">Part of the 50S ribosomal subunit; part of the 5S rRNA/L5/L18/L25 subcomplex. Contacts the 5S rRNA and the P site tRNA. Forms a bridge to the 30S subunit in the 70S ribosome.</text>
</comment>
<comment type="similarity">
    <text evidence="1">Belongs to the universal ribosomal protein uL5 family.</text>
</comment>
<sequence>MAKLHDYYRDQVVNELKAKFNYSSVMQVPRIEKITLNMGVGEALTDKKLLDNAVADLTAISGQKPLITKARKSVAGFKIRQGYPIGCKVTLRGERMWEFFERLITIAVPRIRDFRGLNAKSFDGRGNYSMGVREQIIFPEIDYDKVDRVRGLDITITTTAKSDEEGQALLAAFNFPFRK</sequence>
<name>RL5_ACTP2</name>
<reference key="1">
    <citation type="journal article" date="2008" name="J. Bacteriol.">
        <title>The complete genome sequence of Actinobacillus pleuropneumoniae L20 (serotype 5b).</title>
        <authorList>
            <person name="Foote S.J."/>
            <person name="Bosse J.T."/>
            <person name="Bouevitch A.B."/>
            <person name="Langford P.R."/>
            <person name="Young N.M."/>
            <person name="Nash J.H.E."/>
        </authorList>
    </citation>
    <scope>NUCLEOTIDE SEQUENCE [LARGE SCALE GENOMIC DNA]</scope>
    <source>
        <strain>L20</strain>
    </source>
</reference>
<organism>
    <name type="scientific">Actinobacillus pleuropneumoniae serotype 5b (strain L20)</name>
    <dbReference type="NCBI Taxonomy" id="416269"/>
    <lineage>
        <taxon>Bacteria</taxon>
        <taxon>Pseudomonadati</taxon>
        <taxon>Pseudomonadota</taxon>
        <taxon>Gammaproteobacteria</taxon>
        <taxon>Pasteurellales</taxon>
        <taxon>Pasteurellaceae</taxon>
        <taxon>Actinobacillus</taxon>
    </lineage>
</organism>
<keyword id="KW-1185">Reference proteome</keyword>
<keyword id="KW-0687">Ribonucleoprotein</keyword>
<keyword id="KW-0689">Ribosomal protein</keyword>
<keyword id="KW-0694">RNA-binding</keyword>
<keyword id="KW-0699">rRNA-binding</keyword>
<keyword id="KW-0820">tRNA-binding</keyword>
<gene>
    <name evidence="1" type="primary">rplE</name>
    <name type="ordered locus">APL_1771</name>
</gene>
<accession>A3N369</accession>
<protein>
    <recommendedName>
        <fullName evidence="1">Large ribosomal subunit protein uL5</fullName>
    </recommendedName>
    <alternativeName>
        <fullName evidence="2">50S ribosomal protein L5</fullName>
    </alternativeName>
</protein>
<dbReference type="EMBL" id="CP000569">
    <property type="protein sequence ID" value="ABN74855.1"/>
    <property type="molecule type" value="Genomic_DNA"/>
</dbReference>
<dbReference type="RefSeq" id="WP_005619405.1">
    <property type="nucleotide sequence ID" value="NC_009053.1"/>
</dbReference>
<dbReference type="SMR" id="A3N369"/>
<dbReference type="STRING" id="416269.APL_1771"/>
<dbReference type="EnsemblBacteria" id="ABN74855">
    <property type="protein sequence ID" value="ABN74855"/>
    <property type="gene ID" value="APL_1771"/>
</dbReference>
<dbReference type="GeneID" id="92743643"/>
<dbReference type="KEGG" id="apl:APL_1771"/>
<dbReference type="eggNOG" id="COG0094">
    <property type="taxonomic scope" value="Bacteria"/>
</dbReference>
<dbReference type="HOGENOM" id="CLU_061015_2_1_6"/>
<dbReference type="Proteomes" id="UP000001432">
    <property type="component" value="Chromosome"/>
</dbReference>
<dbReference type="GO" id="GO:1990904">
    <property type="term" value="C:ribonucleoprotein complex"/>
    <property type="evidence" value="ECO:0007669"/>
    <property type="project" value="UniProtKB-KW"/>
</dbReference>
<dbReference type="GO" id="GO:0005840">
    <property type="term" value="C:ribosome"/>
    <property type="evidence" value="ECO:0007669"/>
    <property type="project" value="UniProtKB-KW"/>
</dbReference>
<dbReference type="GO" id="GO:0019843">
    <property type="term" value="F:rRNA binding"/>
    <property type="evidence" value="ECO:0007669"/>
    <property type="project" value="UniProtKB-UniRule"/>
</dbReference>
<dbReference type="GO" id="GO:0003735">
    <property type="term" value="F:structural constituent of ribosome"/>
    <property type="evidence" value="ECO:0007669"/>
    <property type="project" value="InterPro"/>
</dbReference>
<dbReference type="GO" id="GO:0000049">
    <property type="term" value="F:tRNA binding"/>
    <property type="evidence" value="ECO:0007669"/>
    <property type="project" value="UniProtKB-UniRule"/>
</dbReference>
<dbReference type="GO" id="GO:0006412">
    <property type="term" value="P:translation"/>
    <property type="evidence" value="ECO:0007669"/>
    <property type="project" value="UniProtKB-UniRule"/>
</dbReference>
<dbReference type="FunFam" id="3.30.1440.10:FF:000001">
    <property type="entry name" value="50S ribosomal protein L5"/>
    <property type="match status" value="1"/>
</dbReference>
<dbReference type="Gene3D" id="3.30.1440.10">
    <property type="match status" value="1"/>
</dbReference>
<dbReference type="HAMAP" id="MF_01333_B">
    <property type="entry name" value="Ribosomal_uL5_B"/>
    <property type="match status" value="1"/>
</dbReference>
<dbReference type="InterPro" id="IPR002132">
    <property type="entry name" value="Ribosomal_uL5"/>
</dbReference>
<dbReference type="InterPro" id="IPR020930">
    <property type="entry name" value="Ribosomal_uL5_bac-type"/>
</dbReference>
<dbReference type="InterPro" id="IPR031309">
    <property type="entry name" value="Ribosomal_uL5_C"/>
</dbReference>
<dbReference type="InterPro" id="IPR020929">
    <property type="entry name" value="Ribosomal_uL5_CS"/>
</dbReference>
<dbReference type="InterPro" id="IPR022803">
    <property type="entry name" value="Ribosomal_uL5_dom_sf"/>
</dbReference>
<dbReference type="InterPro" id="IPR031310">
    <property type="entry name" value="Ribosomal_uL5_N"/>
</dbReference>
<dbReference type="NCBIfam" id="NF000585">
    <property type="entry name" value="PRK00010.1"/>
    <property type="match status" value="1"/>
</dbReference>
<dbReference type="PANTHER" id="PTHR11994">
    <property type="entry name" value="60S RIBOSOMAL PROTEIN L11-RELATED"/>
    <property type="match status" value="1"/>
</dbReference>
<dbReference type="Pfam" id="PF00281">
    <property type="entry name" value="Ribosomal_L5"/>
    <property type="match status" value="1"/>
</dbReference>
<dbReference type="Pfam" id="PF00673">
    <property type="entry name" value="Ribosomal_L5_C"/>
    <property type="match status" value="1"/>
</dbReference>
<dbReference type="PIRSF" id="PIRSF002161">
    <property type="entry name" value="Ribosomal_L5"/>
    <property type="match status" value="1"/>
</dbReference>
<dbReference type="SUPFAM" id="SSF55282">
    <property type="entry name" value="RL5-like"/>
    <property type="match status" value="1"/>
</dbReference>
<dbReference type="PROSITE" id="PS00358">
    <property type="entry name" value="RIBOSOMAL_L5"/>
    <property type="match status" value="1"/>
</dbReference>
<evidence type="ECO:0000255" key="1">
    <source>
        <dbReference type="HAMAP-Rule" id="MF_01333"/>
    </source>
</evidence>
<evidence type="ECO:0000305" key="2"/>